<proteinExistence type="evidence at protein level"/>
<accession>P84083</accession>
<accession>P26437</accession>
<protein>
    <recommendedName>
        <fullName>ADP-ribosylation factor 5</fullName>
    </recommendedName>
</protein>
<name>ARF5_RAT</name>
<gene>
    <name type="primary">Arf5</name>
</gene>
<keyword id="KW-0963">Cytoplasm</keyword>
<keyword id="KW-0931">ER-Golgi transport</keyword>
<keyword id="KW-0333">Golgi apparatus</keyword>
<keyword id="KW-0342">GTP-binding</keyword>
<keyword id="KW-0449">Lipoprotein</keyword>
<keyword id="KW-0472">Membrane</keyword>
<keyword id="KW-0519">Myristate</keyword>
<keyword id="KW-0547">Nucleotide-binding</keyword>
<keyword id="KW-0653">Protein transport</keyword>
<keyword id="KW-1185">Reference proteome</keyword>
<keyword id="KW-0813">Transport</keyword>
<organism>
    <name type="scientific">Rattus norvegicus</name>
    <name type="common">Rat</name>
    <dbReference type="NCBI Taxonomy" id="10116"/>
    <lineage>
        <taxon>Eukaryota</taxon>
        <taxon>Metazoa</taxon>
        <taxon>Chordata</taxon>
        <taxon>Craniata</taxon>
        <taxon>Vertebrata</taxon>
        <taxon>Euteleostomi</taxon>
        <taxon>Mammalia</taxon>
        <taxon>Eutheria</taxon>
        <taxon>Euarchontoglires</taxon>
        <taxon>Glires</taxon>
        <taxon>Rodentia</taxon>
        <taxon>Myomorpha</taxon>
        <taxon>Muroidea</taxon>
        <taxon>Muridae</taxon>
        <taxon>Murinae</taxon>
        <taxon>Rattus</taxon>
    </lineage>
</organism>
<dbReference type="EMBL" id="L12384">
    <property type="protein sequence ID" value="AAA40689.1"/>
    <property type="molecule type" value="mRNA"/>
</dbReference>
<dbReference type="EMBL" id="BC087692">
    <property type="protein sequence ID" value="AAH87692.1"/>
    <property type="molecule type" value="mRNA"/>
</dbReference>
<dbReference type="RefSeq" id="NP_077063.1">
    <property type="nucleotide sequence ID" value="NM_024149.2"/>
</dbReference>
<dbReference type="SMR" id="P84083"/>
<dbReference type="BioGRID" id="249402">
    <property type="interactions" value="1"/>
</dbReference>
<dbReference type="FunCoup" id="P84083">
    <property type="interactions" value="1934"/>
</dbReference>
<dbReference type="IntAct" id="P84083">
    <property type="interactions" value="3"/>
</dbReference>
<dbReference type="STRING" id="10116.ENSRNOP00000010429"/>
<dbReference type="iPTMnet" id="P84083"/>
<dbReference type="PhosphoSitePlus" id="P84083"/>
<dbReference type="SwissPalm" id="P84083"/>
<dbReference type="jPOST" id="P84083"/>
<dbReference type="PaxDb" id="10116-ENSRNOP00000010429"/>
<dbReference type="GeneID" id="79117"/>
<dbReference type="KEGG" id="rno:79117"/>
<dbReference type="UCSC" id="RGD:621278">
    <property type="organism name" value="rat"/>
</dbReference>
<dbReference type="AGR" id="RGD:621278"/>
<dbReference type="CTD" id="381"/>
<dbReference type="RGD" id="621278">
    <property type="gene designation" value="Arf5"/>
</dbReference>
<dbReference type="VEuPathDB" id="HostDB:ENSRNOG00000007806"/>
<dbReference type="eggNOG" id="KOG0070">
    <property type="taxonomic scope" value="Eukaryota"/>
</dbReference>
<dbReference type="HOGENOM" id="CLU_040729_9_3_1"/>
<dbReference type="InParanoid" id="P84083"/>
<dbReference type="OrthoDB" id="7961at9989"/>
<dbReference type="PhylomeDB" id="P84083"/>
<dbReference type="TreeFam" id="TF300808"/>
<dbReference type="Reactome" id="R-RNO-6807878">
    <property type="pathway name" value="COPI-mediated anterograde transport"/>
</dbReference>
<dbReference type="Reactome" id="R-RNO-6811434">
    <property type="pathway name" value="COPI-dependent Golgi-to-ER retrograde traffic"/>
</dbReference>
<dbReference type="PRO" id="PR:P84083"/>
<dbReference type="Proteomes" id="UP000002494">
    <property type="component" value="Chromosome 4"/>
</dbReference>
<dbReference type="Bgee" id="ENSRNOG00000007806">
    <property type="expression patterns" value="Expressed in pancreas and 19 other cell types or tissues"/>
</dbReference>
<dbReference type="GO" id="GO:0005737">
    <property type="term" value="C:cytoplasm"/>
    <property type="evidence" value="ECO:0000266"/>
    <property type="project" value="RGD"/>
</dbReference>
<dbReference type="GO" id="GO:0005794">
    <property type="term" value="C:Golgi apparatus"/>
    <property type="evidence" value="ECO:0007669"/>
    <property type="project" value="UniProtKB-SubCell"/>
</dbReference>
<dbReference type="GO" id="GO:0048471">
    <property type="term" value="C:perinuclear region of cytoplasm"/>
    <property type="evidence" value="ECO:0007669"/>
    <property type="project" value="UniProtKB-SubCell"/>
</dbReference>
<dbReference type="GO" id="GO:0005886">
    <property type="term" value="C:plasma membrane"/>
    <property type="evidence" value="ECO:0000266"/>
    <property type="project" value="RGD"/>
</dbReference>
<dbReference type="GO" id="GO:0005525">
    <property type="term" value="F:GTP binding"/>
    <property type="evidence" value="ECO:0000318"/>
    <property type="project" value="GO_Central"/>
</dbReference>
<dbReference type="GO" id="GO:0003924">
    <property type="term" value="F:GTPase activity"/>
    <property type="evidence" value="ECO:0007669"/>
    <property type="project" value="InterPro"/>
</dbReference>
<dbReference type="GO" id="GO:0006886">
    <property type="term" value="P:intracellular protein transport"/>
    <property type="evidence" value="ECO:0000318"/>
    <property type="project" value="GO_Central"/>
</dbReference>
<dbReference type="GO" id="GO:0006890">
    <property type="term" value="P:retrograde vesicle-mediated transport, Golgi to endoplasmic reticulum"/>
    <property type="evidence" value="ECO:0000266"/>
    <property type="project" value="RGD"/>
</dbReference>
<dbReference type="GO" id="GO:0016192">
    <property type="term" value="P:vesicle-mediated transport"/>
    <property type="evidence" value="ECO:0000318"/>
    <property type="project" value="GO_Central"/>
</dbReference>
<dbReference type="CDD" id="cd04150">
    <property type="entry name" value="Arf1_5_like"/>
    <property type="match status" value="1"/>
</dbReference>
<dbReference type="FunFam" id="3.40.50.300:FF:000024">
    <property type="entry name" value="ADP-ribosylation factor 1"/>
    <property type="match status" value="1"/>
</dbReference>
<dbReference type="Gene3D" id="3.40.50.300">
    <property type="entry name" value="P-loop containing nucleotide triphosphate hydrolases"/>
    <property type="match status" value="1"/>
</dbReference>
<dbReference type="InterPro" id="IPR045872">
    <property type="entry name" value="Arf1-5-like"/>
</dbReference>
<dbReference type="InterPro" id="IPR027417">
    <property type="entry name" value="P-loop_NTPase"/>
</dbReference>
<dbReference type="InterPro" id="IPR005225">
    <property type="entry name" value="Small_GTP-bd"/>
</dbReference>
<dbReference type="InterPro" id="IPR024156">
    <property type="entry name" value="Small_GTPase_ARF"/>
</dbReference>
<dbReference type="InterPro" id="IPR006689">
    <property type="entry name" value="Small_GTPase_ARF/SAR"/>
</dbReference>
<dbReference type="NCBIfam" id="TIGR00231">
    <property type="entry name" value="small_GTP"/>
    <property type="match status" value="1"/>
</dbReference>
<dbReference type="PANTHER" id="PTHR11711">
    <property type="entry name" value="ADP RIBOSYLATION FACTOR-RELATED"/>
    <property type="match status" value="1"/>
</dbReference>
<dbReference type="Pfam" id="PF00025">
    <property type="entry name" value="Arf"/>
    <property type="match status" value="1"/>
</dbReference>
<dbReference type="PRINTS" id="PR00328">
    <property type="entry name" value="SAR1GTPBP"/>
</dbReference>
<dbReference type="SMART" id="SM00177">
    <property type="entry name" value="ARF"/>
    <property type="match status" value="1"/>
</dbReference>
<dbReference type="SMART" id="SM00175">
    <property type="entry name" value="RAB"/>
    <property type="match status" value="1"/>
</dbReference>
<dbReference type="SMART" id="SM00178">
    <property type="entry name" value="SAR"/>
    <property type="match status" value="1"/>
</dbReference>
<dbReference type="SUPFAM" id="SSF52540">
    <property type="entry name" value="P-loop containing nucleoside triphosphate hydrolases"/>
    <property type="match status" value="1"/>
</dbReference>
<dbReference type="PROSITE" id="PS51417">
    <property type="entry name" value="ARF"/>
    <property type="match status" value="1"/>
</dbReference>
<feature type="initiator methionine" description="Removed" evidence="3">
    <location>
        <position position="1"/>
    </location>
</feature>
<feature type="chain" id="PRO_0000207398" description="ADP-ribosylation factor 5">
    <location>
        <begin position="2"/>
        <end position="180"/>
    </location>
</feature>
<feature type="binding site" evidence="1">
    <location>
        <begin position="24"/>
        <end position="31"/>
    </location>
    <ligand>
        <name>GTP</name>
        <dbReference type="ChEBI" id="CHEBI:37565"/>
    </ligand>
</feature>
<feature type="binding site" evidence="1">
    <location>
        <begin position="67"/>
        <end position="71"/>
    </location>
    <ligand>
        <name>GTP</name>
        <dbReference type="ChEBI" id="CHEBI:37565"/>
    </ligand>
</feature>
<feature type="binding site" evidence="1">
    <location>
        <begin position="126"/>
        <end position="129"/>
    </location>
    <ligand>
        <name>GTP</name>
        <dbReference type="ChEBI" id="CHEBI:37565"/>
    </ligand>
</feature>
<feature type="lipid moiety-binding region" description="N-myristoyl glycine" evidence="3">
    <location>
        <position position="2"/>
    </location>
</feature>
<sequence>MGLTVSALFSRIFGKKQMRILMVGLDAAGKTTILYKLKLGEIVTTIPTIGFNVETVEYKNICFTVWDVGGQDKIRPLWRHYFQNTQGLIFVVDSNDRERVQESADELQKMLQEDELRDAVLLVFANKQDMPNAMPVSELTDKLGLQHLRSRTWYVQATCATQGTGLYDGLDWLSHELSKR</sequence>
<reference key="1">
    <citation type="journal article" date="1996" name="Mol. Cell. Biochem.">
        <title>Interspecies relationships among ADP-ribosylation factors (ARFs): evidence of evolutionary pressure to maintain individual identities.</title>
        <authorList>
            <person name="Price S.R."/>
            <person name="Nightingale M.S."/>
            <person name="Tsuchiya M."/>
            <person name="Moss J."/>
            <person name="Vaughan M."/>
        </authorList>
    </citation>
    <scope>NUCLEOTIDE SEQUENCE [MRNA]</scope>
    <source>
        <tissue>Brain</tissue>
    </source>
</reference>
<reference key="2">
    <citation type="journal article" date="2004" name="Genome Res.">
        <title>The status, quality, and expansion of the NIH full-length cDNA project: the Mammalian Gene Collection (MGC).</title>
        <authorList>
            <consortium name="The MGC Project Team"/>
        </authorList>
    </citation>
    <scope>NUCLEOTIDE SEQUENCE [LARGE SCALE MRNA]</scope>
    <source>
        <tissue>Ovary</tissue>
    </source>
</reference>
<reference key="3">
    <citation type="journal article" date="1999" name="Mol. Cell. Biol.">
        <title>Identification of a new Pyk2 target protein with Arf-GAP activity.</title>
        <authorList>
            <person name="Andreev J."/>
            <person name="Simon J.-P."/>
            <person name="Sabatini D.D."/>
            <person name="Kam J."/>
            <person name="Plowman G."/>
            <person name="Randazzo P.A."/>
            <person name="Schlessinger J."/>
        </authorList>
    </citation>
    <scope>INTERACTION WITH ASAP2</scope>
</reference>
<comment type="function">
    <text evidence="2">GTP-binding protein involved in protein trafficking; may modulate vesicle budding and uncoating within the Golgi apparatus.</text>
</comment>
<comment type="subunit">
    <text evidence="1 2 3">Interacts (when activated) with GGA1, GGA2 and GGA3; the interaction is required for proper subcellular location of GGA1, GGA2 and GGA3 (By similarity). Binds ASAP2 (By similarity). Interacts with NCS1/FREQ at the Golgi complex. Interacts with RAB11FIP3 and RAB11FIP4 (By similarity).</text>
</comment>
<comment type="subcellular location">
    <subcellularLocation>
        <location evidence="2">Golgi apparatus</location>
    </subcellularLocation>
    <subcellularLocation>
        <location evidence="3">Cytoplasm</location>
        <location evidence="3">Perinuclear region</location>
    </subcellularLocation>
    <subcellularLocation>
        <location evidence="3">Membrane</location>
        <topology evidence="3">Lipid-anchor</topology>
    </subcellularLocation>
    <subcellularLocation>
        <location evidence="2">Golgi apparatus</location>
        <location evidence="2">trans-Golgi network membrane</location>
        <topology evidence="2">Lipid-anchor</topology>
    </subcellularLocation>
</comment>
<comment type="similarity">
    <text evidence="4">Belongs to the small GTPase superfamily. Arf family.</text>
</comment>
<evidence type="ECO:0000250" key="1"/>
<evidence type="ECO:0000250" key="2">
    <source>
        <dbReference type="UniProtKB" id="P84084"/>
    </source>
</evidence>
<evidence type="ECO:0000250" key="3">
    <source>
        <dbReference type="UniProtKB" id="P84085"/>
    </source>
</evidence>
<evidence type="ECO:0000305" key="4"/>